<protein>
    <recommendedName>
        <fullName evidence="1">Protein GrpE</fullName>
    </recommendedName>
    <alternativeName>
        <fullName evidence="1">HSP-70 cofactor</fullName>
    </alternativeName>
</protein>
<evidence type="ECO:0000255" key="1">
    <source>
        <dbReference type="HAMAP-Rule" id="MF_01151"/>
    </source>
</evidence>
<evidence type="ECO:0000256" key="2">
    <source>
        <dbReference type="SAM" id="MobiDB-lite"/>
    </source>
</evidence>
<dbReference type="EMBL" id="CP001011">
    <property type="protein sequence ID" value="ACB92867.1"/>
    <property type="molecule type" value="Genomic_DNA"/>
</dbReference>
<dbReference type="RefSeq" id="WP_004085850.1">
    <property type="nucleotide sequence ID" value="NC_010577.1"/>
</dbReference>
<dbReference type="SMR" id="B2I6F7"/>
<dbReference type="GeneID" id="93905188"/>
<dbReference type="KEGG" id="xfn:XfasM23_1456"/>
<dbReference type="HOGENOM" id="CLU_057217_6_0_6"/>
<dbReference type="Proteomes" id="UP000001698">
    <property type="component" value="Chromosome"/>
</dbReference>
<dbReference type="GO" id="GO:0005829">
    <property type="term" value="C:cytosol"/>
    <property type="evidence" value="ECO:0007669"/>
    <property type="project" value="TreeGrafter"/>
</dbReference>
<dbReference type="GO" id="GO:0000774">
    <property type="term" value="F:adenyl-nucleotide exchange factor activity"/>
    <property type="evidence" value="ECO:0007669"/>
    <property type="project" value="InterPro"/>
</dbReference>
<dbReference type="GO" id="GO:0042803">
    <property type="term" value="F:protein homodimerization activity"/>
    <property type="evidence" value="ECO:0007669"/>
    <property type="project" value="InterPro"/>
</dbReference>
<dbReference type="GO" id="GO:0051087">
    <property type="term" value="F:protein-folding chaperone binding"/>
    <property type="evidence" value="ECO:0007669"/>
    <property type="project" value="InterPro"/>
</dbReference>
<dbReference type="GO" id="GO:0051082">
    <property type="term" value="F:unfolded protein binding"/>
    <property type="evidence" value="ECO:0007669"/>
    <property type="project" value="TreeGrafter"/>
</dbReference>
<dbReference type="GO" id="GO:0006457">
    <property type="term" value="P:protein folding"/>
    <property type="evidence" value="ECO:0007669"/>
    <property type="project" value="InterPro"/>
</dbReference>
<dbReference type="CDD" id="cd00446">
    <property type="entry name" value="GrpE"/>
    <property type="match status" value="1"/>
</dbReference>
<dbReference type="FunFam" id="2.30.22.10:FF:000001">
    <property type="entry name" value="Protein GrpE"/>
    <property type="match status" value="1"/>
</dbReference>
<dbReference type="Gene3D" id="3.90.20.20">
    <property type="match status" value="1"/>
</dbReference>
<dbReference type="Gene3D" id="2.30.22.10">
    <property type="entry name" value="Head domain of nucleotide exchange factor GrpE"/>
    <property type="match status" value="1"/>
</dbReference>
<dbReference type="HAMAP" id="MF_01151">
    <property type="entry name" value="GrpE"/>
    <property type="match status" value="1"/>
</dbReference>
<dbReference type="InterPro" id="IPR000740">
    <property type="entry name" value="GrpE"/>
</dbReference>
<dbReference type="InterPro" id="IPR013805">
    <property type="entry name" value="GrpE_coiled_coil"/>
</dbReference>
<dbReference type="InterPro" id="IPR009012">
    <property type="entry name" value="GrpE_head"/>
</dbReference>
<dbReference type="NCBIfam" id="NF010745">
    <property type="entry name" value="PRK14147.1"/>
    <property type="match status" value="1"/>
</dbReference>
<dbReference type="PANTHER" id="PTHR21237">
    <property type="entry name" value="GRPE PROTEIN"/>
    <property type="match status" value="1"/>
</dbReference>
<dbReference type="PANTHER" id="PTHR21237:SF23">
    <property type="entry name" value="GRPE PROTEIN HOMOLOG, MITOCHONDRIAL"/>
    <property type="match status" value="1"/>
</dbReference>
<dbReference type="Pfam" id="PF01025">
    <property type="entry name" value="GrpE"/>
    <property type="match status" value="1"/>
</dbReference>
<dbReference type="PRINTS" id="PR00773">
    <property type="entry name" value="GRPEPROTEIN"/>
</dbReference>
<dbReference type="SUPFAM" id="SSF58014">
    <property type="entry name" value="Coiled-coil domain of nucleotide exchange factor GrpE"/>
    <property type="match status" value="1"/>
</dbReference>
<dbReference type="SUPFAM" id="SSF51064">
    <property type="entry name" value="Head domain of nucleotide exchange factor GrpE"/>
    <property type="match status" value="1"/>
</dbReference>
<dbReference type="PROSITE" id="PS01071">
    <property type="entry name" value="GRPE"/>
    <property type="match status" value="1"/>
</dbReference>
<gene>
    <name evidence="1" type="primary">grpE</name>
    <name type="ordered locus">XfasM23_1456</name>
</gene>
<accession>B2I6F7</accession>
<name>GRPE_XYLF2</name>
<keyword id="KW-0143">Chaperone</keyword>
<keyword id="KW-0963">Cytoplasm</keyword>
<keyword id="KW-0346">Stress response</keyword>
<feature type="chain" id="PRO_1000137643" description="Protein GrpE">
    <location>
        <begin position="1"/>
        <end position="172"/>
    </location>
</feature>
<feature type="region of interest" description="Disordered" evidence="2">
    <location>
        <begin position="1"/>
        <end position="23"/>
    </location>
</feature>
<proteinExistence type="inferred from homology"/>
<reference key="1">
    <citation type="journal article" date="2010" name="J. Bacteriol.">
        <title>Whole genome sequences of two Xylella fastidiosa strains (M12 and M23) causing almond leaf scorch disease in California.</title>
        <authorList>
            <person name="Chen J."/>
            <person name="Xie G."/>
            <person name="Han S."/>
            <person name="Chertkov O."/>
            <person name="Sims D."/>
            <person name="Civerolo E.L."/>
        </authorList>
    </citation>
    <scope>NUCLEOTIDE SEQUENCE [LARGE SCALE GENOMIC DNA]</scope>
    <source>
        <strain>M23</strain>
    </source>
</reference>
<sequence>MNQDHPECDSEELTQNSPETDPLKVEVETLRGEIASIKADVLRERAELENQRKRLIRDVEQARKFANEKLLGELLPVFDSLDAGLTASGSEPSPLRDGLELTYKQLLKVAIDNGLMLLDPVGQLFNPEHHQAISQTEVTDVEPGHVIQVFQKGYLLNERLLRPALVVVAKQD</sequence>
<organism>
    <name type="scientific">Xylella fastidiosa (strain M23)</name>
    <dbReference type="NCBI Taxonomy" id="405441"/>
    <lineage>
        <taxon>Bacteria</taxon>
        <taxon>Pseudomonadati</taxon>
        <taxon>Pseudomonadota</taxon>
        <taxon>Gammaproteobacteria</taxon>
        <taxon>Lysobacterales</taxon>
        <taxon>Lysobacteraceae</taxon>
        <taxon>Xylella</taxon>
    </lineage>
</organism>
<comment type="function">
    <text evidence="1">Participates actively in the response to hyperosmotic and heat shock by preventing the aggregation of stress-denatured proteins, in association with DnaK and GrpE. It is the nucleotide exchange factor for DnaK and may function as a thermosensor. Unfolded proteins bind initially to DnaJ; upon interaction with the DnaJ-bound protein, DnaK hydrolyzes its bound ATP, resulting in the formation of a stable complex. GrpE releases ADP from DnaK; ATP binding to DnaK triggers the release of the substrate protein, thus completing the reaction cycle. Several rounds of ATP-dependent interactions between DnaJ, DnaK and GrpE are required for fully efficient folding.</text>
</comment>
<comment type="subunit">
    <text evidence="1">Homodimer.</text>
</comment>
<comment type="subcellular location">
    <subcellularLocation>
        <location evidence="1">Cytoplasm</location>
    </subcellularLocation>
</comment>
<comment type="similarity">
    <text evidence="1">Belongs to the GrpE family.</text>
</comment>